<protein>
    <recommendedName>
        <fullName evidence="1">4-hydroxy-tetrahydrodipicolinate synthase</fullName>
        <shortName evidence="1">HTPA synthase</shortName>
        <ecNumber evidence="1">4.3.3.7</ecNumber>
    </recommendedName>
</protein>
<proteinExistence type="inferred from homology"/>
<name>DAPA_HALHL</name>
<gene>
    <name evidence="1" type="primary">dapA</name>
    <name type="ordered locus">Hhal_2198</name>
</gene>
<feature type="chain" id="PRO_0000340957" description="4-hydroxy-tetrahydrodipicolinate synthase">
    <location>
        <begin position="1"/>
        <end position="300"/>
    </location>
</feature>
<feature type="active site" description="Proton donor/acceptor" evidence="1">
    <location>
        <position position="142"/>
    </location>
</feature>
<feature type="active site" description="Schiff-base intermediate with substrate" evidence="1">
    <location>
        <position position="170"/>
    </location>
</feature>
<feature type="binding site" evidence="1">
    <location>
        <position position="54"/>
    </location>
    <ligand>
        <name>pyruvate</name>
        <dbReference type="ChEBI" id="CHEBI:15361"/>
    </ligand>
</feature>
<feature type="binding site" evidence="1">
    <location>
        <position position="212"/>
    </location>
    <ligand>
        <name>pyruvate</name>
        <dbReference type="ChEBI" id="CHEBI:15361"/>
    </ligand>
</feature>
<feature type="site" description="Part of a proton relay during catalysis" evidence="1">
    <location>
        <position position="53"/>
    </location>
</feature>
<feature type="site" description="Part of a proton relay during catalysis" evidence="1">
    <location>
        <position position="116"/>
    </location>
</feature>
<organism>
    <name type="scientific">Halorhodospira halophila (strain DSM 244 / SL1)</name>
    <name type="common">Ectothiorhodospira halophila (strain DSM 244 / SL1)</name>
    <dbReference type="NCBI Taxonomy" id="349124"/>
    <lineage>
        <taxon>Bacteria</taxon>
        <taxon>Pseudomonadati</taxon>
        <taxon>Pseudomonadota</taxon>
        <taxon>Gammaproteobacteria</taxon>
        <taxon>Chromatiales</taxon>
        <taxon>Ectothiorhodospiraceae</taxon>
        <taxon>Halorhodospira</taxon>
    </lineage>
</organism>
<keyword id="KW-0028">Amino-acid biosynthesis</keyword>
<keyword id="KW-0963">Cytoplasm</keyword>
<keyword id="KW-0220">Diaminopimelate biosynthesis</keyword>
<keyword id="KW-0456">Lyase</keyword>
<keyword id="KW-0457">Lysine biosynthesis</keyword>
<keyword id="KW-1185">Reference proteome</keyword>
<keyword id="KW-0704">Schiff base</keyword>
<accession>A1WZ50</accession>
<sequence>MTEVVMFRGSMVAMVTPMKAQDGIRDAVDEKALKQLVEYHVEQGSDAIVAVGTTGESATLDYEEHRDVIRATVEAAAGRIPVIGGTGANSTWEAIELTRSAMEAGCDAALLVVPYYNKPTQEGLVQHFSAIAEAVPIPQILYNVPGRTGCDMLPETVERLADLPNVVGLKEAQGTVERAEEVIRRCGDRLDVFAGDDFNALGMMRVGGKGVISVSANVVPRQMHDLCAAALAGDMQTAEAINERLTPLHQAMFCEPNPVPVKWAVEELGMAGSGMRLPMTRLTEAGQARVRQAMQDAGLL</sequence>
<comment type="function">
    <text evidence="1">Catalyzes the condensation of (S)-aspartate-beta-semialdehyde [(S)-ASA] and pyruvate to 4-hydroxy-tetrahydrodipicolinate (HTPA).</text>
</comment>
<comment type="catalytic activity">
    <reaction evidence="1">
        <text>L-aspartate 4-semialdehyde + pyruvate = (2S,4S)-4-hydroxy-2,3,4,5-tetrahydrodipicolinate + H2O + H(+)</text>
        <dbReference type="Rhea" id="RHEA:34171"/>
        <dbReference type="ChEBI" id="CHEBI:15361"/>
        <dbReference type="ChEBI" id="CHEBI:15377"/>
        <dbReference type="ChEBI" id="CHEBI:15378"/>
        <dbReference type="ChEBI" id="CHEBI:67139"/>
        <dbReference type="ChEBI" id="CHEBI:537519"/>
        <dbReference type="EC" id="4.3.3.7"/>
    </reaction>
</comment>
<comment type="pathway">
    <text evidence="1">Amino-acid biosynthesis; L-lysine biosynthesis via DAP pathway; (S)-tetrahydrodipicolinate from L-aspartate: step 3/4.</text>
</comment>
<comment type="subunit">
    <text evidence="1">Homotetramer; dimer of dimers.</text>
</comment>
<comment type="subcellular location">
    <subcellularLocation>
        <location evidence="1">Cytoplasm</location>
    </subcellularLocation>
</comment>
<comment type="similarity">
    <text evidence="1">Belongs to the DapA family.</text>
</comment>
<comment type="caution">
    <text evidence="2">Was originally thought to be a dihydrodipicolinate synthase (DHDPS), catalyzing the condensation of (S)-aspartate-beta-semialdehyde [(S)-ASA] and pyruvate to dihydrodipicolinate (DHDP). However, it was shown in E.coli that the product of the enzymatic reaction is not dihydrodipicolinate but in fact (4S)-4-hydroxy-2,3,4,5-tetrahydro-(2S)-dipicolinic acid (HTPA), and that the consecutive dehydration reaction leading to DHDP is not spontaneous but catalyzed by DapB.</text>
</comment>
<evidence type="ECO:0000255" key="1">
    <source>
        <dbReference type="HAMAP-Rule" id="MF_00418"/>
    </source>
</evidence>
<evidence type="ECO:0000305" key="2"/>
<dbReference type="EC" id="4.3.3.7" evidence="1"/>
<dbReference type="EMBL" id="CP000544">
    <property type="protein sequence ID" value="ABM62962.1"/>
    <property type="molecule type" value="Genomic_DNA"/>
</dbReference>
<dbReference type="SMR" id="A1WZ50"/>
<dbReference type="STRING" id="349124.Hhal_2198"/>
<dbReference type="KEGG" id="hha:Hhal_2198"/>
<dbReference type="eggNOG" id="COG0329">
    <property type="taxonomic scope" value="Bacteria"/>
</dbReference>
<dbReference type="HOGENOM" id="CLU_049343_7_1_6"/>
<dbReference type="UniPathway" id="UPA00034">
    <property type="reaction ID" value="UER00017"/>
</dbReference>
<dbReference type="Proteomes" id="UP000000647">
    <property type="component" value="Chromosome"/>
</dbReference>
<dbReference type="GO" id="GO:0005829">
    <property type="term" value="C:cytosol"/>
    <property type="evidence" value="ECO:0007669"/>
    <property type="project" value="TreeGrafter"/>
</dbReference>
<dbReference type="GO" id="GO:0008840">
    <property type="term" value="F:4-hydroxy-tetrahydrodipicolinate synthase activity"/>
    <property type="evidence" value="ECO:0007669"/>
    <property type="project" value="UniProtKB-UniRule"/>
</dbReference>
<dbReference type="GO" id="GO:0019877">
    <property type="term" value="P:diaminopimelate biosynthetic process"/>
    <property type="evidence" value="ECO:0007669"/>
    <property type="project" value="UniProtKB-UniRule"/>
</dbReference>
<dbReference type="GO" id="GO:0009089">
    <property type="term" value="P:lysine biosynthetic process via diaminopimelate"/>
    <property type="evidence" value="ECO:0007669"/>
    <property type="project" value="UniProtKB-UniRule"/>
</dbReference>
<dbReference type="CDD" id="cd00950">
    <property type="entry name" value="DHDPS"/>
    <property type="match status" value="1"/>
</dbReference>
<dbReference type="Gene3D" id="3.20.20.70">
    <property type="entry name" value="Aldolase class I"/>
    <property type="match status" value="1"/>
</dbReference>
<dbReference type="HAMAP" id="MF_00418">
    <property type="entry name" value="DapA"/>
    <property type="match status" value="1"/>
</dbReference>
<dbReference type="InterPro" id="IPR013785">
    <property type="entry name" value="Aldolase_TIM"/>
</dbReference>
<dbReference type="InterPro" id="IPR005263">
    <property type="entry name" value="DapA"/>
</dbReference>
<dbReference type="InterPro" id="IPR002220">
    <property type="entry name" value="DapA-like"/>
</dbReference>
<dbReference type="InterPro" id="IPR020625">
    <property type="entry name" value="Schiff_base-form_aldolases_AS"/>
</dbReference>
<dbReference type="InterPro" id="IPR020624">
    <property type="entry name" value="Schiff_base-form_aldolases_CS"/>
</dbReference>
<dbReference type="NCBIfam" id="TIGR00674">
    <property type="entry name" value="dapA"/>
    <property type="match status" value="1"/>
</dbReference>
<dbReference type="PANTHER" id="PTHR12128:SF66">
    <property type="entry name" value="4-HYDROXY-2-OXOGLUTARATE ALDOLASE, MITOCHONDRIAL"/>
    <property type="match status" value="1"/>
</dbReference>
<dbReference type="PANTHER" id="PTHR12128">
    <property type="entry name" value="DIHYDRODIPICOLINATE SYNTHASE"/>
    <property type="match status" value="1"/>
</dbReference>
<dbReference type="Pfam" id="PF00701">
    <property type="entry name" value="DHDPS"/>
    <property type="match status" value="1"/>
</dbReference>
<dbReference type="PIRSF" id="PIRSF001365">
    <property type="entry name" value="DHDPS"/>
    <property type="match status" value="1"/>
</dbReference>
<dbReference type="PRINTS" id="PR00146">
    <property type="entry name" value="DHPICSNTHASE"/>
</dbReference>
<dbReference type="SMART" id="SM01130">
    <property type="entry name" value="DHDPS"/>
    <property type="match status" value="1"/>
</dbReference>
<dbReference type="SUPFAM" id="SSF51569">
    <property type="entry name" value="Aldolase"/>
    <property type="match status" value="1"/>
</dbReference>
<dbReference type="PROSITE" id="PS00665">
    <property type="entry name" value="DHDPS_1"/>
    <property type="match status" value="1"/>
</dbReference>
<dbReference type="PROSITE" id="PS00666">
    <property type="entry name" value="DHDPS_2"/>
    <property type="match status" value="1"/>
</dbReference>
<reference key="1">
    <citation type="submission" date="2006-12" db="EMBL/GenBank/DDBJ databases">
        <title>Complete sequence of Halorhodospira halophila SL1.</title>
        <authorList>
            <consortium name="US DOE Joint Genome Institute"/>
            <person name="Copeland A."/>
            <person name="Lucas S."/>
            <person name="Lapidus A."/>
            <person name="Barry K."/>
            <person name="Detter J.C."/>
            <person name="Glavina del Rio T."/>
            <person name="Hammon N."/>
            <person name="Israni S."/>
            <person name="Dalin E."/>
            <person name="Tice H."/>
            <person name="Pitluck S."/>
            <person name="Saunders E."/>
            <person name="Brettin T."/>
            <person name="Bruce D."/>
            <person name="Han C."/>
            <person name="Tapia R."/>
            <person name="Schmutz J."/>
            <person name="Larimer F."/>
            <person name="Land M."/>
            <person name="Hauser L."/>
            <person name="Kyrpides N."/>
            <person name="Mikhailova N."/>
            <person name="Hoff W."/>
            <person name="Richardson P."/>
        </authorList>
    </citation>
    <scope>NUCLEOTIDE SEQUENCE [LARGE SCALE GENOMIC DNA]</scope>
    <source>
        <strain>DSM 244 / SL1</strain>
    </source>
</reference>